<feature type="chain" id="PRO_0000049379" description="WUSCHEL-related homeobox 12">
    <location>
        <begin position="1"/>
        <end position="268"/>
    </location>
</feature>
<feature type="DNA-binding region" description="Homeobox; WUS-type" evidence="2">
    <location>
        <begin position="17"/>
        <end position="81"/>
    </location>
</feature>
<feature type="region of interest" description="Disordered" evidence="3">
    <location>
        <begin position="1"/>
        <end position="22"/>
    </location>
</feature>
<feature type="region of interest" description="Disordered" evidence="3">
    <location>
        <begin position="173"/>
        <end position="198"/>
    </location>
</feature>
<feature type="compositionally biased region" description="Polar residues" evidence="3">
    <location>
        <begin position="1"/>
        <end position="16"/>
    </location>
</feature>
<evidence type="ECO:0000250" key="1"/>
<evidence type="ECO:0000255" key="2">
    <source>
        <dbReference type="PROSITE-ProRule" id="PRU00108"/>
    </source>
</evidence>
<evidence type="ECO:0000256" key="3">
    <source>
        <dbReference type="SAM" id="MobiDB-lite"/>
    </source>
</evidence>
<evidence type="ECO:0000305" key="4"/>
<reference key="1">
    <citation type="journal article" date="2004" name="Development">
        <title>Expression dynamics of WOX genes mark cell fate decisions during early embryonic patterning in Arabidopsis thaliana.</title>
        <authorList>
            <person name="Haecker A."/>
            <person name="Gross-Hardt R."/>
            <person name="Geiges B."/>
            <person name="Sarkar A."/>
            <person name="Breuninger H."/>
            <person name="Herrmann M."/>
            <person name="Laux T."/>
        </authorList>
    </citation>
    <scope>NUCLEOTIDE SEQUENCE [MRNA]</scope>
    <source>
        <strain>cv. Landsberg erecta</strain>
    </source>
</reference>
<reference key="2">
    <citation type="journal article" date="1997" name="DNA Res.">
        <title>Structural analysis of Arabidopsis thaliana chromosome 5. II. Sequence features of the regions of 1,044,062 bp covered by thirteen physically assigned P1 clones.</title>
        <authorList>
            <person name="Kotani H."/>
            <person name="Nakamura Y."/>
            <person name="Sato S."/>
            <person name="Kaneko T."/>
            <person name="Asamizu E."/>
            <person name="Miyajima N."/>
            <person name="Tabata S."/>
        </authorList>
    </citation>
    <scope>NUCLEOTIDE SEQUENCE [LARGE SCALE GENOMIC DNA]</scope>
    <source>
        <strain>cv. Columbia</strain>
    </source>
</reference>
<reference key="3">
    <citation type="journal article" date="2017" name="Plant J.">
        <title>Araport11: a complete reannotation of the Arabidopsis thaliana reference genome.</title>
        <authorList>
            <person name="Cheng C.Y."/>
            <person name="Krishnakumar V."/>
            <person name="Chan A.P."/>
            <person name="Thibaud-Nissen F."/>
            <person name="Schobel S."/>
            <person name="Town C.D."/>
        </authorList>
    </citation>
    <scope>GENOME REANNOTATION</scope>
    <source>
        <strain>cv. Columbia</strain>
    </source>
</reference>
<reference key="4">
    <citation type="journal article" date="2002" name="Science">
        <title>Functional annotation of a full-length Arabidopsis cDNA collection.</title>
        <authorList>
            <person name="Seki M."/>
            <person name="Narusaka M."/>
            <person name="Kamiya A."/>
            <person name="Ishida J."/>
            <person name="Satou M."/>
            <person name="Sakurai T."/>
            <person name="Nakajima M."/>
            <person name="Enju A."/>
            <person name="Akiyama K."/>
            <person name="Oono Y."/>
            <person name="Muramatsu M."/>
            <person name="Hayashizaki Y."/>
            <person name="Kawai J."/>
            <person name="Carninci P."/>
            <person name="Itoh M."/>
            <person name="Ishii Y."/>
            <person name="Arakawa T."/>
            <person name="Shibata K."/>
            <person name="Shinagawa A."/>
            <person name="Shinozaki K."/>
        </authorList>
    </citation>
    <scope>NUCLEOTIDE SEQUENCE [LARGE SCALE MRNA]</scope>
    <source>
        <strain>cv. Columbia</strain>
    </source>
</reference>
<reference key="5">
    <citation type="journal article" date="2003" name="Science">
        <title>Empirical analysis of transcriptional activity in the Arabidopsis genome.</title>
        <authorList>
            <person name="Yamada K."/>
            <person name="Lim J."/>
            <person name="Dale J.M."/>
            <person name="Chen H."/>
            <person name="Shinn P."/>
            <person name="Palm C.J."/>
            <person name="Southwick A.M."/>
            <person name="Wu H.C."/>
            <person name="Kim C.J."/>
            <person name="Nguyen M."/>
            <person name="Pham P.K."/>
            <person name="Cheuk R.F."/>
            <person name="Karlin-Newmann G."/>
            <person name="Liu S.X."/>
            <person name="Lam B."/>
            <person name="Sakano H."/>
            <person name="Wu T."/>
            <person name="Yu G."/>
            <person name="Miranda M."/>
            <person name="Quach H.L."/>
            <person name="Tripp M."/>
            <person name="Chang C.H."/>
            <person name="Lee J.M."/>
            <person name="Toriumi M.J."/>
            <person name="Chan M.M."/>
            <person name="Tang C.C."/>
            <person name="Onodera C.S."/>
            <person name="Deng J.M."/>
            <person name="Akiyama K."/>
            <person name="Ansari Y."/>
            <person name="Arakawa T."/>
            <person name="Banh J."/>
            <person name="Banno F."/>
            <person name="Bowser L."/>
            <person name="Brooks S.Y."/>
            <person name="Carninci P."/>
            <person name="Chao Q."/>
            <person name="Choy N."/>
            <person name="Enju A."/>
            <person name="Goldsmith A.D."/>
            <person name="Gurjal M."/>
            <person name="Hansen N.F."/>
            <person name="Hayashizaki Y."/>
            <person name="Johnson-Hopson C."/>
            <person name="Hsuan V.W."/>
            <person name="Iida K."/>
            <person name="Karnes M."/>
            <person name="Khan S."/>
            <person name="Koesema E."/>
            <person name="Ishida J."/>
            <person name="Jiang P.X."/>
            <person name="Jones T."/>
            <person name="Kawai J."/>
            <person name="Kamiya A."/>
            <person name="Meyers C."/>
            <person name="Nakajima M."/>
            <person name="Narusaka M."/>
            <person name="Seki M."/>
            <person name="Sakurai T."/>
            <person name="Satou M."/>
            <person name="Tamse R."/>
            <person name="Vaysberg M."/>
            <person name="Wallender E.K."/>
            <person name="Wong C."/>
            <person name="Yamamura Y."/>
            <person name="Yuan S."/>
            <person name="Shinozaki K."/>
            <person name="Davis R.W."/>
            <person name="Theologis A."/>
            <person name="Ecker J.R."/>
        </authorList>
    </citation>
    <scope>NUCLEOTIDE SEQUENCE [LARGE SCALE MRNA]</scope>
    <source>
        <strain>cv. Columbia</strain>
    </source>
</reference>
<gene>
    <name type="primary">WOX12</name>
    <name type="ordered locus">At5g17810</name>
    <name type="ORF">MVA3.160</name>
    <name type="ORF">MVA3.17</name>
</gene>
<protein>
    <recommendedName>
        <fullName>WUSCHEL-related homeobox 12</fullName>
    </recommendedName>
</protein>
<organism>
    <name type="scientific">Arabidopsis thaliana</name>
    <name type="common">Mouse-ear cress</name>
    <dbReference type="NCBI Taxonomy" id="3702"/>
    <lineage>
        <taxon>Eukaryota</taxon>
        <taxon>Viridiplantae</taxon>
        <taxon>Streptophyta</taxon>
        <taxon>Embryophyta</taxon>
        <taxon>Tracheophyta</taxon>
        <taxon>Spermatophyta</taxon>
        <taxon>Magnoliopsida</taxon>
        <taxon>eudicotyledons</taxon>
        <taxon>Gunneridae</taxon>
        <taxon>Pentapetalae</taxon>
        <taxon>rosids</taxon>
        <taxon>malvids</taxon>
        <taxon>Brassicales</taxon>
        <taxon>Brassicaceae</taxon>
        <taxon>Camelineae</taxon>
        <taxon>Arabidopsis</taxon>
    </lineage>
</organism>
<keyword id="KW-0217">Developmental protein</keyword>
<keyword id="KW-0238">DNA-binding</keyword>
<keyword id="KW-0371">Homeobox</keyword>
<keyword id="KW-0539">Nucleus</keyword>
<keyword id="KW-1185">Reference proteome</keyword>
<keyword id="KW-0804">Transcription</keyword>
<keyword id="KW-0805">Transcription regulation</keyword>
<dbReference type="EMBL" id="AY251403">
    <property type="protein sequence ID" value="AAP37141.1"/>
    <property type="molecule type" value="mRNA"/>
</dbReference>
<dbReference type="EMBL" id="AB006706">
    <property type="protein sequence ID" value="BAB09580.1"/>
    <property type="status" value="ALT_SEQ"/>
    <property type="molecule type" value="Genomic_DNA"/>
</dbReference>
<dbReference type="EMBL" id="CP002688">
    <property type="protein sequence ID" value="AED92472.1"/>
    <property type="molecule type" value="Genomic_DNA"/>
</dbReference>
<dbReference type="EMBL" id="CP002688">
    <property type="protein sequence ID" value="AED92473.1"/>
    <property type="molecule type" value="Genomic_DNA"/>
</dbReference>
<dbReference type="EMBL" id="AK117910">
    <property type="protein sequence ID" value="BAC42548.1"/>
    <property type="molecule type" value="mRNA"/>
</dbReference>
<dbReference type="EMBL" id="BT006232">
    <property type="protein sequence ID" value="AAP12881.1"/>
    <property type="molecule type" value="mRNA"/>
</dbReference>
<dbReference type="RefSeq" id="NP_001190327.1">
    <property type="nucleotide sequence ID" value="NM_001203398.1"/>
</dbReference>
<dbReference type="RefSeq" id="NP_197283.2">
    <property type="nucleotide sequence ID" value="NM_121787.3"/>
</dbReference>
<dbReference type="SMR" id="Q8GY25"/>
<dbReference type="BioGRID" id="16925">
    <property type="interactions" value="1"/>
</dbReference>
<dbReference type="FunCoup" id="Q8GY25">
    <property type="interactions" value="252"/>
</dbReference>
<dbReference type="IntAct" id="Q8GY25">
    <property type="interactions" value="3"/>
</dbReference>
<dbReference type="STRING" id="3702.Q8GY25"/>
<dbReference type="PaxDb" id="3702-AT5G17810.2"/>
<dbReference type="EnsemblPlants" id="AT5G17810.1">
    <property type="protein sequence ID" value="AT5G17810.1"/>
    <property type="gene ID" value="AT5G17810"/>
</dbReference>
<dbReference type="EnsemblPlants" id="AT5G17810.2">
    <property type="protein sequence ID" value="AT5G17810.2"/>
    <property type="gene ID" value="AT5G17810"/>
</dbReference>
<dbReference type="GeneID" id="831649"/>
<dbReference type="Gramene" id="AT5G17810.1">
    <property type="protein sequence ID" value="AT5G17810.1"/>
    <property type="gene ID" value="AT5G17810"/>
</dbReference>
<dbReference type="Gramene" id="AT5G17810.2">
    <property type="protein sequence ID" value="AT5G17810.2"/>
    <property type="gene ID" value="AT5G17810"/>
</dbReference>
<dbReference type="KEGG" id="ath:AT5G17810"/>
<dbReference type="Araport" id="AT5G17810"/>
<dbReference type="TAIR" id="AT5G17810">
    <property type="gene designation" value="WOX12"/>
</dbReference>
<dbReference type="eggNOG" id="ENOG502QUIQ">
    <property type="taxonomic scope" value="Eukaryota"/>
</dbReference>
<dbReference type="HOGENOM" id="CLU_030463_0_0_1"/>
<dbReference type="InParanoid" id="Q8GY25"/>
<dbReference type="OMA" id="PQHMTTM"/>
<dbReference type="PhylomeDB" id="Q8GY25"/>
<dbReference type="PRO" id="PR:Q8GY25"/>
<dbReference type="Proteomes" id="UP000006548">
    <property type="component" value="Chromosome 5"/>
</dbReference>
<dbReference type="ExpressionAtlas" id="Q8GY25">
    <property type="expression patterns" value="baseline and differential"/>
</dbReference>
<dbReference type="GO" id="GO:0005634">
    <property type="term" value="C:nucleus"/>
    <property type="evidence" value="ECO:0007669"/>
    <property type="project" value="UniProtKB-SubCell"/>
</dbReference>
<dbReference type="GO" id="GO:0003677">
    <property type="term" value="F:DNA binding"/>
    <property type="evidence" value="ECO:0007669"/>
    <property type="project" value="UniProtKB-KW"/>
</dbReference>
<dbReference type="GO" id="GO:0003700">
    <property type="term" value="F:DNA-binding transcription factor activity"/>
    <property type="evidence" value="ECO:0000250"/>
    <property type="project" value="TAIR"/>
</dbReference>
<dbReference type="GO" id="GO:0048830">
    <property type="term" value="P:adventitious root development"/>
    <property type="evidence" value="ECO:0000316"/>
    <property type="project" value="TAIR"/>
</dbReference>
<dbReference type="FunFam" id="1.10.10.60:FF:000118">
    <property type="entry name" value="WUSCHEL-related homeobox 11"/>
    <property type="match status" value="1"/>
</dbReference>
<dbReference type="Gene3D" id="1.10.10.60">
    <property type="entry name" value="Homeodomain-like"/>
    <property type="match status" value="1"/>
</dbReference>
<dbReference type="InterPro" id="IPR001356">
    <property type="entry name" value="HD"/>
</dbReference>
<dbReference type="InterPro" id="IPR009057">
    <property type="entry name" value="Homeodomain-like_sf"/>
</dbReference>
<dbReference type="InterPro" id="IPR044558">
    <property type="entry name" value="WOX11-like"/>
</dbReference>
<dbReference type="PANTHER" id="PTHR46998">
    <property type="entry name" value="WUSCHEL-RELATED HOMEOBOX 11"/>
    <property type="match status" value="1"/>
</dbReference>
<dbReference type="PANTHER" id="PTHR46998:SF5">
    <property type="entry name" value="WUSCHEL-RELATED HOMEOBOX 12"/>
    <property type="match status" value="1"/>
</dbReference>
<dbReference type="Pfam" id="PF00046">
    <property type="entry name" value="Homeodomain"/>
    <property type="match status" value="1"/>
</dbReference>
<dbReference type="SMART" id="SM00389">
    <property type="entry name" value="HOX"/>
    <property type="match status" value="1"/>
</dbReference>
<dbReference type="SUPFAM" id="SSF46689">
    <property type="entry name" value="Homeodomain-like"/>
    <property type="match status" value="1"/>
</dbReference>
<dbReference type="PROSITE" id="PS50071">
    <property type="entry name" value="HOMEOBOX_2"/>
    <property type="match status" value="1"/>
</dbReference>
<comment type="function">
    <text evidence="1">Transcription factor which may be involved in developmental processes.</text>
</comment>
<comment type="subcellular location">
    <subcellularLocation>
        <location evidence="2">Nucleus</location>
    </subcellularLocation>
</comment>
<comment type="similarity">
    <text evidence="4">Belongs to the WUS homeobox family.</text>
</comment>
<comment type="sequence caution" evidence="4">
    <conflict type="erroneous gene model prediction">
        <sequence resource="EMBL-CDS" id="BAB09580"/>
    </conflict>
</comment>
<name>WOX12_ARATH</name>
<sequence>MNQEGASHSPSSTSTEPVRARWSPKPEQILILESIFNSGTVNPPKDETVRIRKMLEKFGAVGDANVFYWFQNRRSRSRRRHRQLLAATTAAATSIGAEDHQHMTAMSMHQYPCSNNEIDLGFGSCSNLSANYFLNGSSSSQIPSFFLGLSSSSGGCENNNGMENLFKMYGHESDHNHQQQHHSSNAASVLNPSDQNSNSQYEQEGFMTVFINGVPMEVTKGAIDMKTMFGDDSVLLHSSGLPLPTDEFGFLMHSLQHGQTYFLVPRQT</sequence>
<proteinExistence type="evidence at transcript level"/>
<accession>Q8GY25</accession>
<accession>Q9FN71</accession>